<proteinExistence type="evidence at transcript level"/>
<sequence>MPGDMGPPKQGGTRYGSISSPPSPGPQQAPPGGTYLSEKIPIPDTESGAFSLRKLWAFTGPGFLMSIAFLDPGNIESDLQAGAVAGFKLLWVLLWATVLGLLCQRLAARLGVVTGKDLGEVCHLYYPKVPRILLWLTIELAIVGSDMQEVIGTAIAFSLLSAGRIPLWGGVLITIVDTFFFLFLDNYGLRKLEAFFGFLITIMALTFGYEYVVARPAQGALLQGLFLPSCAGCGQPELLQAVGIVGAIIMPHNIYLHSSLVKSREVDRSRRADIREANMYFLIEATIALSVSFLINLFVMAVFGQAFYKQTNQAAFNICANSSLHDYATIFPRNNLTVAVDIYQGGVILGCLFGPAALYIWAVGLLAAGQSSTMTGTYAGQFVMEGFLKLRWSRFARVLLTRSCAILPTVLVAVFRDLRDLSGLNDLLNVLQSLLLPFAVLPILTFTSMPAVMQEFANGLVSKVISSSIMVLVCAVNLYFVISYVPSLPHPDYFSLVALLAAAYLGLTTYLVWTCLITQGATLLAHSSHQRFLYGLPEEDQENGRTSG</sequence>
<reference key="1">
    <citation type="journal article" date="1998" name="Anim. Genet.">
        <title>Cloning, sequencing and linkage mapping of the NRAMP1 gene of sheep and deer.</title>
        <authorList>
            <person name="Matthews G.D."/>
            <person name="Crawford A.M."/>
        </authorList>
    </citation>
    <scope>NUCLEOTIDE SEQUENCE [MRNA]</scope>
</reference>
<accession>P56436</accession>
<dbReference type="EMBL" id="AF005379">
    <property type="protein sequence ID" value="AAC28240.1"/>
    <property type="molecule type" value="mRNA"/>
</dbReference>
<dbReference type="SMR" id="P56436"/>
<dbReference type="GlyCosmos" id="P56436">
    <property type="glycosylation" value="2 sites, No reported glycans"/>
</dbReference>
<dbReference type="GO" id="GO:0031902">
    <property type="term" value="C:late endosome membrane"/>
    <property type="evidence" value="ECO:0007669"/>
    <property type="project" value="UniProtKB-SubCell"/>
</dbReference>
<dbReference type="GO" id="GO:0005765">
    <property type="term" value="C:lysosomal membrane"/>
    <property type="evidence" value="ECO:0007669"/>
    <property type="project" value="UniProtKB-SubCell"/>
</dbReference>
<dbReference type="GO" id="GO:0030670">
    <property type="term" value="C:phagocytic vesicle membrane"/>
    <property type="evidence" value="ECO:0007669"/>
    <property type="project" value="TreeGrafter"/>
</dbReference>
<dbReference type="GO" id="GO:0005886">
    <property type="term" value="C:plasma membrane"/>
    <property type="evidence" value="ECO:0007669"/>
    <property type="project" value="TreeGrafter"/>
</dbReference>
<dbReference type="GO" id="GO:0015086">
    <property type="term" value="F:cadmium ion transmembrane transporter activity"/>
    <property type="evidence" value="ECO:0007669"/>
    <property type="project" value="TreeGrafter"/>
</dbReference>
<dbReference type="GO" id="GO:0005381">
    <property type="term" value="F:iron ion transmembrane transporter activity"/>
    <property type="evidence" value="ECO:0000250"/>
    <property type="project" value="UniProtKB"/>
</dbReference>
<dbReference type="GO" id="GO:0005384">
    <property type="term" value="F:manganese ion transmembrane transporter activity"/>
    <property type="evidence" value="ECO:0000250"/>
    <property type="project" value="UniProtKB"/>
</dbReference>
<dbReference type="GO" id="GO:0051139">
    <property type="term" value="F:metal cation:proton antiporter activity"/>
    <property type="evidence" value="ECO:0000250"/>
    <property type="project" value="UniProtKB"/>
</dbReference>
<dbReference type="GO" id="GO:0006826">
    <property type="term" value="P:iron ion transport"/>
    <property type="evidence" value="ECO:0000250"/>
    <property type="project" value="UniProtKB"/>
</dbReference>
<dbReference type="GO" id="GO:0006828">
    <property type="term" value="P:manganese ion transport"/>
    <property type="evidence" value="ECO:0000250"/>
    <property type="project" value="UniProtKB"/>
</dbReference>
<dbReference type="HAMAP" id="MF_00221">
    <property type="entry name" value="NRAMP"/>
    <property type="match status" value="1"/>
</dbReference>
<dbReference type="InterPro" id="IPR001046">
    <property type="entry name" value="NRAMP_fam"/>
</dbReference>
<dbReference type="NCBIfam" id="TIGR01197">
    <property type="entry name" value="nramp"/>
    <property type="match status" value="1"/>
</dbReference>
<dbReference type="NCBIfam" id="NF037982">
    <property type="entry name" value="Nramp_1"/>
    <property type="match status" value="1"/>
</dbReference>
<dbReference type="PANTHER" id="PTHR11706:SF52">
    <property type="entry name" value="NATURAL RESISTANCE-ASSOCIATED MACROPHAGE PROTEIN 1"/>
    <property type="match status" value="1"/>
</dbReference>
<dbReference type="PANTHER" id="PTHR11706">
    <property type="entry name" value="SOLUTE CARRIER PROTEIN FAMILY 11 MEMBER"/>
    <property type="match status" value="1"/>
</dbReference>
<dbReference type="Pfam" id="PF01566">
    <property type="entry name" value="Nramp"/>
    <property type="match status" value="1"/>
</dbReference>
<dbReference type="PRINTS" id="PR00447">
    <property type="entry name" value="NATRESASSCMP"/>
</dbReference>
<keyword id="KW-0967">Endosome</keyword>
<keyword id="KW-0325">Glycoprotein</keyword>
<keyword id="KW-0406">Ion transport</keyword>
<keyword id="KW-0408">Iron</keyword>
<keyword id="KW-0410">Iron transport</keyword>
<keyword id="KW-0458">Lysosome</keyword>
<keyword id="KW-0472">Membrane</keyword>
<keyword id="KW-0812">Transmembrane</keyword>
<keyword id="KW-1133">Transmembrane helix</keyword>
<keyword id="KW-0813">Transport</keyword>
<comment type="function">
    <text evidence="1">Macrophage-specific antiporter that fluxes metal ions in either direction against a proton gradient. Localized to late endosomal lysosomal membranes, delivers bivalent cations from the cytosol into these acidic compartments where they may directly affect antimicrobial activity. Involved in iron metabolism and host natural resistance to infection with intracellular parasites. Pathogen resistance involves sequestration of Fe(2+) and Mn(2+), cofactors of both prokaryotic and eukaryotic catalases and superoxide dismutases, not only to protect the macrophage against its own generation of reactive oxygen species, but to deny the cations to the pathogen for synthesis of its protective enzymes.</text>
</comment>
<comment type="catalytic activity">
    <reaction evidence="1">
        <text>Zn(2+)(in) + H(+)(out) = Zn(2+)(out) + H(+)(in)</text>
        <dbReference type="Rhea" id="RHEA:28839"/>
        <dbReference type="ChEBI" id="CHEBI:15378"/>
        <dbReference type="ChEBI" id="CHEBI:29105"/>
    </reaction>
</comment>
<comment type="catalytic activity">
    <reaction evidence="1">
        <text>Fe(2+)(in) + H(+)(out) = Fe(2+)(out) + H(+)(in)</text>
        <dbReference type="Rhea" id="RHEA:29439"/>
        <dbReference type="ChEBI" id="CHEBI:15378"/>
        <dbReference type="ChEBI" id="CHEBI:29033"/>
    </reaction>
</comment>
<comment type="catalytic activity">
    <reaction evidence="1">
        <text>Mn(2+)(in) + H(+)(out) = Mn(2+)(out) + H(+)(in)</text>
        <dbReference type="Rhea" id="RHEA:73063"/>
        <dbReference type="ChEBI" id="CHEBI:15378"/>
        <dbReference type="ChEBI" id="CHEBI:29035"/>
    </reaction>
</comment>
<comment type="subcellular location">
    <subcellularLocation>
        <location evidence="1">Late endosome membrane</location>
        <topology evidence="2">Multi-pass membrane protein</topology>
    </subcellularLocation>
    <subcellularLocation>
        <location evidence="1">Lysosome membrane</location>
        <topology evidence="2">Multi-pass membrane protein</topology>
    </subcellularLocation>
</comment>
<comment type="similarity">
    <text evidence="4">Belongs to the NRAMP family.</text>
</comment>
<feature type="chain" id="PRO_0000212587" description="Natural resistance-associated macrophage protein 1">
    <location>
        <begin position="1"/>
        <end position="548"/>
    </location>
</feature>
<feature type="topological domain" description="Cytoplasmic" evidence="2">
    <location>
        <begin position="1"/>
        <end position="55"/>
    </location>
</feature>
<feature type="transmembrane region" description="Helical" evidence="2">
    <location>
        <begin position="56"/>
        <end position="73"/>
    </location>
</feature>
<feature type="topological domain" description="Extracellular" evidence="2">
    <location>
        <begin position="74"/>
        <end position="82"/>
    </location>
</feature>
<feature type="transmembrane region" description="Helical" evidence="2">
    <location>
        <begin position="83"/>
        <end position="102"/>
    </location>
</feature>
<feature type="topological domain" description="Cytoplasmic" evidence="2">
    <location>
        <begin position="103"/>
        <end position="139"/>
    </location>
</feature>
<feature type="transmembrane region" description="Helical" evidence="2">
    <location>
        <begin position="140"/>
        <end position="160"/>
    </location>
</feature>
<feature type="topological domain" description="Extracellular" evidence="2">
    <location>
        <begin position="161"/>
        <end position="164"/>
    </location>
</feature>
<feature type="transmembrane region" description="Helical" evidence="2">
    <location>
        <begin position="165"/>
        <end position="184"/>
    </location>
</feature>
<feature type="topological domain" description="Cytoplasmic" evidence="2">
    <location>
        <begin position="185"/>
        <end position="193"/>
    </location>
</feature>
<feature type="transmembrane region" description="Helical" evidence="2">
    <location>
        <begin position="194"/>
        <end position="214"/>
    </location>
</feature>
<feature type="topological domain" description="Extracellular" evidence="2">
    <location>
        <begin position="215"/>
        <end position="237"/>
    </location>
</feature>
<feature type="transmembrane region" description="Helical" evidence="2">
    <location>
        <begin position="238"/>
        <end position="256"/>
    </location>
</feature>
<feature type="topological domain" description="Cytoplasmic" evidence="2">
    <location>
        <begin position="257"/>
        <end position="284"/>
    </location>
</feature>
<feature type="transmembrane region" description="Helical" evidence="2">
    <location>
        <begin position="285"/>
        <end position="304"/>
    </location>
</feature>
<feature type="topological domain" description="Extracellular" evidence="2">
    <location>
        <begin position="305"/>
        <end position="346"/>
    </location>
</feature>
<feature type="transmembrane region" description="Helical" evidence="2">
    <location>
        <begin position="347"/>
        <end position="366"/>
    </location>
</feature>
<feature type="topological domain" description="Cytoplasmic" evidence="2">
    <location>
        <begin position="367"/>
        <end position="397"/>
    </location>
</feature>
<feature type="transmembrane region" description="Helical" evidence="2">
    <location>
        <begin position="398"/>
        <end position="415"/>
    </location>
</feature>
<feature type="topological domain" description="Extracellular" evidence="2">
    <location>
        <begin position="416"/>
        <end position="426"/>
    </location>
</feature>
<feature type="transmembrane region" description="Helical" evidence="2">
    <location>
        <begin position="427"/>
        <end position="447"/>
    </location>
</feature>
<feature type="topological domain" description="Cytoplasmic" evidence="2">
    <location>
        <begin position="448"/>
        <end position="463"/>
    </location>
</feature>
<feature type="transmembrane region" description="Helical" evidence="2">
    <location>
        <begin position="464"/>
        <end position="485"/>
    </location>
</feature>
<feature type="topological domain" description="Extracellular" evidence="2">
    <location>
        <begin position="486"/>
        <end position="493"/>
    </location>
</feature>
<feature type="transmembrane region" description="Helical" evidence="2">
    <location>
        <begin position="494"/>
        <end position="513"/>
    </location>
</feature>
<feature type="topological domain" description="Cytoplasmic" evidence="2">
    <location>
        <begin position="514"/>
        <end position="548"/>
    </location>
</feature>
<feature type="region of interest" description="Disordered" evidence="3">
    <location>
        <begin position="1"/>
        <end position="38"/>
    </location>
</feature>
<feature type="glycosylation site" description="N-linked (GlcNAc...) asparagine" evidence="2">
    <location>
        <position position="321"/>
    </location>
</feature>
<feature type="glycosylation site" description="N-linked (GlcNAc...) asparagine" evidence="2">
    <location>
        <position position="335"/>
    </location>
</feature>
<name>NRAM1_CEREL</name>
<organism>
    <name type="scientific">Cervus elaphus</name>
    <name type="common">Red deer</name>
    <dbReference type="NCBI Taxonomy" id="9860"/>
    <lineage>
        <taxon>Eukaryota</taxon>
        <taxon>Metazoa</taxon>
        <taxon>Chordata</taxon>
        <taxon>Craniata</taxon>
        <taxon>Vertebrata</taxon>
        <taxon>Euteleostomi</taxon>
        <taxon>Mammalia</taxon>
        <taxon>Eutheria</taxon>
        <taxon>Laurasiatheria</taxon>
        <taxon>Artiodactyla</taxon>
        <taxon>Ruminantia</taxon>
        <taxon>Pecora</taxon>
        <taxon>Cervidae</taxon>
        <taxon>Cervinae</taxon>
        <taxon>Cervus</taxon>
    </lineage>
</organism>
<evidence type="ECO:0000250" key="1">
    <source>
        <dbReference type="UniProtKB" id="P49279"/>
    </source>
</evidence>
<evidence type="ECO:0000255" key="2"/>
<evidence type="ECO:0000256" key="3">
    <source>
        <dbReference type="SAM" id="MobiDB-lite"/>
    </source>
</evidence>
<evidence type="ECO:0000305" key="4"/>
<protein>
    <recommendedName>
        <fullName>Natural resistance-associated macrophage protein 1</fullName>
        <shortName>NRAMP 1</shortName>
    </recommendedName>
    <alternativeName>
        <fullName>Solute carrier family 11 member 1</fullName>
    </alternativeName>
</protein>
<gene>
    <name type="primary">SLC11A1</name>
    <name type="synonym">NRAMP1</name>
</gene>